<name>YGFZ_ECO55</name>
<organism>
    <name type="scientific">Escherichia coli (strain 55989 / EAEC)</name>
    <dbReference type="NCBI Taxonomy" id="585055"/>
    <lineage>
        <taxon>Bacteria</taxon>
        <taxon>Pseudomonadati</taxon>
        <taxon>Pseudomonadota</taxon>
        <taxon>Gammaproteobacteria</taxon>
        <taxon>Enterobacterales</taxon>
        <taxon>Enterobacteriaceae</taxon>
        <taxon>Escherichia</taxon>
    </lineage>
</organism>
<protein>
    <recommendedName>
        <fullName evidence="1">tRNA-modifying protein YgfZ</fullName>
    </recommendedName>
</protein>
<gene>
    <name evidence="1" type="primary">ygfZ</name>
    <name type="ordered locus">EC55989_3184</name>
</gene>
<proteinExistence type="inferred from homology"/>
<feature type="chain" id="PRO_1000164410" description="tRNA-modifying protein YgfZ">
    <location>
        <begin position="1"/>
        <end position="326"/>
    </location>
</feature>
<feature type="binding site" evidence="1">
    <location>
        <position position="27"/>
    </location>
    <ligand>
        <name>folate</name>
        <dbReference type="ChEBI" id="CHEBI:62501"/>
    </ligand>
</feature>
<feature type="binding site" evidence="1">
    <location>
        <position position="189"/>
    </location>
    <ligand>
        <name>folate</name>
        <dbReference type="ChEBI" id="CHEBI:62501"/>
    </ligand>
</feature>
<accession>B7LF83</accession>
<reference key="1">
    <citation type="journal article" date="2009" name="PLoS Genet.">
        <title>Organised genome dynamics in the Escherichia coli species results in highly diverse adaptive paths.</title>
        <authorList>
            <person name="Touchon M."/>
            <person name="Hoede C."/>
            <person name="Tenaillon O."/>
            <person name="Barbe V."/>
            <person name="Baeriswyl S."/>
            <person name="Bidet P."/>
            <person name="Bingen E."/>
            <person name="Bonacorsi S."/>
            <person name="Bouchier C."/>
            <person name="Bouvet O."/>
            <person name="Calteau A."/>
            <person name="Chiapello H."/>
            <person name="Clermont O."/>
            <person name="Cruveiller S."/>
            <person name="Danchin A."/>
            <person name="Diard M."/>
            <person name="Dossat C."/>
            <person name="Karoui M.E."/>
            <person name="Frapy E."/>
            <person name="Garry L."/>
            <person name="Ghigo J.M."/>
            <person name="Gilles A.M."/>
            <person name="Johnson J."/>
            <person name="Le Bouguenec C."/>
            <person name="Lescat M."/>
            <person name="Mangenot S."/>
            <person name="Martinez-Jehanne V."/>
            <person name="Matic I."/>
            <person name="Nassif X."/>
            <person name="Oztas S."/>
            <person name="Petit M.A."/>
            <person name="Pichon C."/>
            <person name="Rouy Z."/>
            <person name="Ruf C.S."/>
            <person name="Schneider D."/>
            <person name="Tourret J."/>
            <person name="Vacherie B."/>
            <person name="Vallenet D."/>
            <person name="Medigue C."/>
            <person name="Rocha E.P.C."/>
            <person name="Denamur E."/>
        </authorList>
    </citation>
    <scope>NUCLEOTIDE SEQUENCE [LARGE SCALE GENOMIC DNA]</scope>
    <source>
        <strain>55989 / EAEC</strain>
    </source>
</reference>
<evidence type="ECO:0000255" key="1">
    <source>
        <dbReference type="HAMAP-Rule" id="MF_01175"/>
    </source>
</evidence>
<comment type="function">
    <text evidence="1">Folate-binding protein involved in regulating the level of ATP-DnaA and in the modification of some tRNAs. It is probably a key factor in regulatory networks that act via tRNA modification, such as initiation of chromosomal replication.</text>
</comment>
<comment type="subcellular location">
    <subcellularLocation>
        <location evidence="1">Cytoplasm</location>
    </subcellularLocation>
</comment>
<comment type="similarity">
    <text evidence="1">Belongs to the tRNA-modifying YgfZ family.</text>
</comment>
<dbReference type="EMBL" id="CU928145">
    <property type="protein sequence ID" value="CAU99146.1"/>
    <property type="molecule type" value="Genomic_DNA"/>
</dbReference>
<dbReference type="RefSeq" id="WP_000886062.1">
    <property type="nucleotide sequence ID" value="NC_011748.1"/>
</dbReference>
<dbReference type="SMR" id="B7LF83"/>
<dbReference type="GeneID" id="75205265"/>
<dbReference type="KEGG" id="eck:EC55989_3184"/>
<dbReference type="HOGENOM" id="CLU_007884_6_1_6"/>
<dbReference type="Proteomes" id="UP000000746">
    <property type="component" value="Chromosome"/>
</dbReference>
<dbReference type="GO" id="GO:0005737">
    <property type="term" value="C:cytoplasm"/>
    <property type="evidence" value="ECO:0007669"/>
    <property type="project" value="UniProtKB-SubCell"/>
</dbReference>
<dbReference type="GO" id="GO:0005542">
    <property type="term" value="F:folic acid binding"/>
    <property type="evidence" value="ECO:0007669"/>
    <property type="project" value="UniProtKB-UniRule"/>
</dbReference>
<dbReference type="GO" id="GO:0016226">
    <property type="term" value="P:iron-sulfur cluster assembly"/>
    <property type="evidence" value="ECO:0007669"/>
    <property type="project" value="TreeGrafter"/>
</dbReference>
<dbReference type="GO" id="GO:0009451">
    <property type="term" value="P:RNA modification"/>
    <property type="evidence" value="ECO:0007669"/>
    <property type="project" value="InterPro"/>
</dbReference>
<dbReference type="GO" id="GO:0008033">
    <property type="term" value="P:tRNA processing"/>
    <property type="evidence" value="ECO:0007669"/>
    <property type="project" value="UniProtKB-UniRule"/>
</dbReference>
<dbReference type="FunFam" id="2.40.30.160:FF:000001">
    <property type="entry name" value="tRNA-modifying protein YgfZ"/>
    <property type="match status" value="1"/>
</dbReference>
<dbReference type="FunFam" id="3.30.70.1400:FF:000002">
    <property type="entry name" value="tRNA-modifying protein YgfZ"/>
    <property type="match status" value="1"/>
</dbReference>
<dbReference type="FunFam" id="3.30.70.1630:FF:000001">
    <property type="entry name" value="tRNA-modifying protein YgfZ"/>
    <property type="match status" value="1"/>
</dbReference>
<dbReference type="Gene3D" id="2.40.30.160">
    <property type="match status" value="1"/>
</dbReference>
<dbReference type="Gene3D" id="3.30.70.1630">
    <property type="match status" value="1"/>
</dbReference>
<dbReference type="Gene3D" id="3.30.70.1400">
    <property type="entry name" value="Aminomethyltransferase beta-barrel domains"/>
    <property type="match status" value="1"/>
</dbReference>
<dbReference type="HAMAP" id="MF_01175">
    <property type="entry name" value="tRNA_modifying_YgfZ"/>
    <property type="match status" value="1"/>
</dbReference>
<dbReference type="InterPro" id="IPR006222">
    <property type="entry name" value="GCV_T_N"/>
</dbReference>
<dbReference type="InterPro" id="IPR029043">
    <property type="entry name" value="GcvT/YgfZ_C"/>
</dbReference>
<dbReference type="InterPro" id="IPR023758">
    <property type="entry name" value="tRNA-modifying_YgfZ"/>
</dbReference>
<dbReference type="InterPro" id="IPR045179">
    <property type="entry name" value="YgfZ/GcvT"/>
</dbReference>
<dbReference type="InterPro" id="IPR017703">
    <property type="entry name" value="YgfZ/GcvT_CS"/>
</dbReference>
<dbReference type="InterPro" id="IPR048451">
    <property type="entry name" value="YgfZ_barrel"/>
</dbReference>
<dbReference type="NCBIfam" id="NF007110">
    <property type="entry name" value="PRK09559.1"/>
    <property type="match status" value="1"/>
</dbReference>
<dbReference type="NCBIfam" id="TIGR03317">
    <property type="entry name" value="ygfZ_signature"/>
    <property type="match status" value="1"/>
</dbReference>
<dbReference type="PANTHER" id="PTHR22602">
    <property type="entry name" value="TRANSFERASE CAF17, MITOCHONDRIAL-RELATED"/>
    <property type="match status" value="1"/>
</dbReference>
<dbReference type="PANTHER" id="PTHR22602:SF0">
    <property type="entry name" value="TRANSFERASE CAF17, MITOCHONDRIAL-RELATED"/>
    <property type="match status" value="1"/>
</dbReference>
<dbReference type="Pfam" id="PF01571">
    <property type="entry name" value="GCV_T"/>
    <property type="match status" value="1"/>
</dbReference>
<dbReference type="Pfam" id="PF21130">
    <property type="entry name" value="YgfZ_barrel"/>
    <property type="match status" value="1"/>
</dbReference>
<dbReference type="SUPFAM" id="SSF101790">
    <property type="entry name" value="Aminomethyltransferase beta-barrel domain"/>
    <property type="match status" value="1"/>
</dbReference>
<dbReference type="SUPFAM" id="SSF103025">
    <property type="entry name" value="Folate-binding domain"/>
    <property type="match status" value="1"/>
</dbReference>
<sequence length="326" mass="36094">MAFTPFPPRQPTASARLPLTLMTLDDWALATITGADSEKYMQGQVTADVSQMAEDQHLLAAHCDAKGKMWSNLRLFRDGDGFAWIERRSVREPQLTELKKYAVFSKVTIAPDDERVLLGVAGFQARAALANLFSELPSKEKQVVKEGATTLLWFEHPAERFLIVTDEATANMLTDKLRGEAELNNSQQWLALNIEAGFPVIDAANSGQFIPQATNLQALGGISFKKGCYTGQEMVARAKFRGANKRALWLLAGSASRLPEAGEDLELKMGENWRRTGTVLAAVKLEDGQVVVQVVMNNDMEPDSIFRVRDDANTLHIEPLPYSLEE</sequence>
<keyword id="KW-0963">Cytoplasm</keyword>
<keyword id="KW-0290">Folate-binding</keyword>
<keyword id="KW-1185">Reference proteome</keyword>
<keyword id="KW-0819">tRNA processing</keyword>